<name>RL16_FLAPJ</name>
<sequence length="141" mass="15888">MLQPKRTKYRKVQKGKMKGNSQRGHELSNGMFGIKSVHEDGMFLTSRQIEAARIAATRFMKREGQLWIKIFPDKPITKKPLEVRMGKGKGAVEYWAAVVKPGRIMFEVGGVPLSVAKEALRLAAQKLPCKTKFVVARDFEA</sequence>
<proteinExistence type="inferred from homology"/>
<protein>
    <recommendedName>
        <fullName evidence="1">Large ribosomal subunit protein uL16</fullName>
    </recommendedName>
    <alternativeName>
        <fullName evidence="3">50S ribosomal protein L16</fullName>
    </alternativeName>
</protein>
<accession>A6GZ92</accession>
<comment type="function">
    <text evidence="1">Binds 23S rRNA and is also seen to make contacts with the A and possibly P site tRNAs.</text>
</comment>
<comment type="subunit">
    <text evidence="1">Part of the 50S ribosomal subunit.</text>
</comment>
<comment type="similarity">
    <text evidence="1">Belongs to the universal ribosomal protein uL16 family.</text>
</comment>
<reference key="1">
    <citation type="journal article" date="2007" name="Nat. Biotechnol.">
        <title>Complete genome sequence of the fish pathogen Flavobacterium psychrophilum.</title>
        <authorList>
            <person name="Duchaud E."/>
            <person name="Boussaha M."/>
            <person name="Loux V."/>
            <person name="Bernardet J.-F."/>
            <person name="Michel C."/>
            <person name="Kerouault B."/>
            <person name="Mondot S."/>
            <person name="Nicolas P."/>
            <person name="Bossy R."/>
            <person name="Caron C."/>
            <person name="Bessieres P."/>
            <person name="Gibrat J.-F."/>
            <person name="Claverol S."/>
            <person name="Dumetz F."/>
            <person name="Le Henaff M."/>
            <person name="Benmansour A."/>
        </authorList>
    </citation>
    <scope>NUCLEOTIDE SEQUENCE [LARGE SCALE GENOMIC DNA]</scope>
    <source>
        <strain>ATCC 49511 / DSM 21280 / CIP 103535 / JIP02/86</strain>
    </source>
</reference>
<gene>
    <name evidence="1" type="primary">rplP</name>
    <name type="ordered locus">FP1332</name>
</gene>
<organism>
    <name type="scientific">Flavobacterium psychrophilum (strain ATCC 49511 / DSM 21280 / CIP 103535 / JIP02/86)</name>
    <dbReference type="NCBI Taxonomy" id="402612"/>
    <lineage>
        <taxon>Bacteria</taxon>
        <taxon>Pseudomonadati</taxon>
        <taxon>Bacteroidota</taxon>
        <taxon>Flavobacteriia</taxon>
        <taxon>Flavobacteriales</taxon>
        <taxon>Flavobacteriaceae</taxon>
        <taxon>Flavobacterium</taxon>
    </lineage>
</organism>
<keyword id="KW-1185">Reference proteome</keyword>
<keyword id="KW-0687">Ribonucleoprotein</keyword>
<keyword id="KW-0689">Ribosomal protein</keyword>
<keyword id="KW-0694">RNA-binding</keyword>
<keyword id="KW-0699">rRNA-binding</keyword>
<keyword id="KW-0820">tRNA-binding</keyword>
<dbReference type="EMBL" id="AM398681">
    <property type="protein sequence ID" value="CAL43415.1"/>
    <property type="molecule type" value="Genomic_DNA"/>
</dbReference>
<dbReference type="RefSeq" id="WP_011963463.1">
    <property type="nucleotide sequence ID" value="NC_009613.3"/>
</dbReference>
<dbReference type="RefSeq" id="YP_001296226.1">
    <property type="nucleotide sequence ID" value="NC_009613.3"/>
</dbReference>
<dbReference type="SMR" id="A6GZ92"/>
<dbReference type="STRING" id="402612.FP1332"/>
<dbReference type="EnsemblBacteria" id="CAL43415">
    <property type="protein sequence ID" value="CAL43415"/>
    <property type="gene ID" value="FP1332"/>
</dbReference>
<dbReference type="GeneID" id="66553235"/>
<dbReference type="KEGG" id="fps:FP1332"/>
<dbReference type="PATRIC" id="fig|402612.5.peg.1349"/>
<dbReference type="eggNOG" id="COG0197">
    <property type="taxonomic scope" value="Bacteria"/>
</dbReference>
<dbReference type="HOGENOM" id="CLU_078858_2_1_10"/>
<dbReference type="OrthoDB" id="9802589at2"/>
<dbReference type="Proteomes" id="UP000006394">
    <property type="component" value="Chromosome"/>
</dbReference>
<dbReference type="GO" id="GO:0022625">
    <property type="term" value="C:cytosolic large ribosomal subunit"/>
    <property type="evidence" value="ECO:0007669"/>
    <property type="project" value="TreeGrafter"/>
</dbReference>
<dbReference type="GO" id="GO:0019843">
    <property type="term" value="F:rRNA binding"/>
    <property type="evidence" value="ECO:0007669"/>
    <property type="project" value="UniProtKB-UniRule"/>
</dbReference>
<dbReference type="GO" id="GO:0003735">
    <property type="term" value="F:structural constituent of ribosome"/>
    <property type="evidence" value="ECO:0007669"/>
    <property type="project" value="InterPro"/>
</dbReference>
<dbReference type="GO" id="GO:0000049">
    <property type="term" value="F:tRNA binding"/>
    <property type="evidence" value="ECO:0007669"/>
    <property type="project" value="UniProtKB-KW"/>
</dbReference>
<dbReference type="GO" id="GO:0006412">
    <property type="term" value="P:translation"/>
    <property type="evidence" value="ECO:0007669"/>
    <property type="project" value="UniProtKB-UniRule"/>
</dbReference>
<dbReference type="CDD" id="cd01433">
    <property type="entry name" value="Ribosomal_L16_L10e"/>
    <property type="match status" value="1"/>
</dbReference>
<dbReference type="FunFam" id="3.90.1170.10:FF:000001">
    <property type="entry name" value="50S ribosomal protein L16"/>
    <property type="match status" value="1"/>
</dbReference>
<dbReference type="Gene3D" id="3.90.1170.10">
    <property type="entry name" value="Ribosomal protein L10e/L16"/>
    <property type="match status" value="1"/>
</dbReference>
<dbReference type="HAMAP" id="MF_01342">
    <property type="entry name" value="Ribosomal_uL16"/>
    <property type="match status" value="1"/>
</dbReference>
<dbReference type="InterPro" id="IPR047873">
    <property type="entry name" value="Ribosomal_uL16"/>
</dbReference>
<dbReference type="InterPro" id="IPR000114">
    <property type="entry name" value="Ribosomal_uL16_bact-type"/>
</dbReference>
<dbReference type="InterPro" id="IPR020798">
    <property type="entry name" value="Ribosomal_uL16_CS"/>
</dbReference>
<dbReference type="InterPro" id="IPR016180">
    <property type="entry name" value="Ribosomal_uL16_dom"/>
</dbReference>
<dbReference type="InterPro" id="IPR036920">
    <property type="entry name" value="Ribosomal_uL16_sf"/>
</dbReference>
<dbReference type="NCBIfam" id="TIGR01164">
    <property type="entry name" value="rplP_bact"/>
    <property type="match status" value="1"/>
</dbReference>
<dbReference type="PANTHER" id="PTHR12220">
    <property type="entry name" value="50S/60S RIBOSOMAL PROTEIN L16"/>
    <property type="match status" value="1"/>
</dbReference>
<dbReference type="PANTHER" id="PTHR12220:SF13">
    <property type="entry name" value="LARGE RIBOSOMAL SUBUNIT PROTEIN UL16M"/>
    <property type="match status" value="1"/>
</dbReference>
<dbReference type="Pfam" id="PF00252">
    <property type="entry name" value="Ribosomal_L16"/>
    <property type="match status" value="1"/>
</dbReference>
<dbReference type="PRINTS" id="PR00060">
    <property type="entry name" value="RIBOSOMALL16"/>
</dbReference>
<dbReference type="SUPFAM" id="SSF54686">
    <property type="entry name" value="Ribosomal protein L16p/L10e"/>
    <property type="match status" value="1"/>
</dbReference>
<dbReference type="PROSITE" id="PS00586">
    <property type="entry name" value="RIBOSOMAL_L16_1"/>
    <property type="match status" value="1"/>
</dbReference>
<dbReference type="PROSITE" id="PS00701">
    <property type="entry name" value="RIBOSOMAL_L16_2"/>
    <property type="match status" value="1"/>
</dbReference>
<evidence type="ECO:0000255" key="1">
    <source>
        <dbReference type="HAMAP-Rule" id="MF_01342"/>
    </source>
</evidence>
<evidence type="ECO:0000256" key="2">
    <source>
        <dbReference type="SAM" id="MobiDB-lite"/>
    </source>
</evidence>
<evidence type="ECO:0000305" key="3"/>
<feature type="chain" id="PRO_1000054619" description="Large ribosomal subunit protein uL16">
    <location>
        <begin position="1"/>
        <end position="141"/>
    </location>
</feature>
<feature type="region of interest" description="Disordered" evidence="2">
    <location>
        <begin position="1"/>
        <end position="29"/>
    </location>
</feature>
<feature type="compositionally biased region" description="Basic residues" evidence="2">
    <location>
        <begin position="1"/>
        <end position="17"/>
    </location>
</feature>